<gene>
    <name type="primary">ptp4</name>
    <name evidence="1" type="synonym">dgk1</name>
    <name type="ORF">SPBC3D6.05</name>
</gene>
<sequence>MSTKLTWSQWSKKHEIPRKALHTSIGFFALLLQGCGYHAAQIIPVIEIGFIPAFTGDVIRFNWPAFSRLYNRVIGPLMRESEKNAWNGVIFYMIGVWIVLKVFPEEIAVMSVLLLSWCDTTASTVGRKWGKYTPKIAKNKSLAGSLGAFVCGVFCCYVYWGLFRTGPDSLAAQSRIPFPWLCLINGFIGAFAEAMDVWGLDDNLVIPVVSACLLYLIM</sequence>
<dbReference type="EC" id="2.7.1.174" evidence="1"/>
<dbReference type="EMBL" id="CU329671">
    <property type="protein sequence ID" value="CAB09125.1"/>
    <property type="molecule type" value="Genomic_DNA"/>
</dbReference>
<dbReference type="PIR" id="T40365">
    <property type="entry name" value="T40365"/>
</dbReference>
<dbReference type="RefSeq" id="NP_595517.1">
    <property type="nucleotide sequence ID" value="NM_001021426.2"/>
</dbReference>
<dbReference type="BioGRID" id="277514">
    <property type="interactions" value="39"/>
</dbReference>
<dbReference type="FunCoup" id="P87170">
    <property type="interactions" value="69"/>
</dbReference>
<dbReference type="STRING" id="284812.P87170"/>
<dbReference type="PaxDb" id="4896-SPBC3D6.05.1"/>
<dbReference type="EnsemblFungi" id="SPBC3D6.05.1">
    <property type="protein sequence ID" value="SPBC3D6.05.1:pep"/>
    <property type="gene ID" value="SPBC3D6.05"/>
</dbReference>
<dbReference type="GeneID" id="2540998"/>
<dbReference type="KEGG" id="spo:2540998"/>
<dbReference type="PomBase" id="SPBC3D6.05">
    <property type="gene designation" value="ptp4"/>
</dbReference>
<dbReference type="VEuPathDB" id="FungiDB:SPBC3D6.05"/>
<dbReference type="eggNOG" id="KOG4453">
    <property type="taxonomic scope" value="Eukaryota"/>
</dbReference>
<dbReference type="HOGENOM" id="CLU_031477_1_0_1"/>
<dbReference type="InParanoid" id="P87170"/>
<dbReference type="OMA" id="TKHEVPR"/>
<dbReference type="PhylomeDB" id="P87170"/>
<dbReference type="PRO" id="PR:P87170"/>
<dbReference type="Proteomes" id="UP000002485">
    <property type="component" value="Chromosome II"/>
</dbReference>
<dbReference type="GO" id="GO:0005783">
    <property type="term" value="C:endoplasmic reticulum"/>
    <property type="evidence" value="ECO:0000269"/>
    <property type="project" value="PomBase"/>
</dbReference>
<dbReference type="GO" id="GO:0005789">
    <property type="term" value="C:endoplasmic reticulum membrane"/>
    <property type="evidence" value="ECO:0000318"/>
    <property type="project" value="GO_Central"/>
</dbReference>
<dbReference type="GO" id="GO:0031965">
    <property type="term" value="C:nuclear membrane"/>
    <property type="evidence" value="ECO:0007669"/>
    <property type="project" value="UniProtKB-SubCell"/>
</dbReference>
<dbReference type="GO" id="GO:0097038">
    <property type="term" value="C:perinuclear endoplasmic reticulum"/>
    <property type="evidence" value="ECO:0000314"/>
    <property type="project" value="PomBase"/>
</dbReference>
<dbReference type="GO" id="GO:0004143">
    <property type="term" value="F:ATP-dependent diacylglycerol kinase activity"/>
    <property type="evidence" value="ECO:0000266"/>
    <property type="project" value="PomBase"/>
</dbReference>
<dbReference type="GO" id="GO:0141035">
    <property type="term" value="F:CTP-dependent diacylglycerol kinase activity"/>
    <property type="evidence" value="ECO:0007669"/>
    <property type="project" value="UniProtKB-EC"/>
</dbReference>
<dbReference type="GO" id="GO:0001727">
    <property type="term" value="F:lipid kinase activity"/>
    <property type="evidence" value="ECO:0000318"/>
    <property type="project" value="GO_Central"/>
</dbReference>
<dbReference type="GO" id="GO:0101026">
    <property type="term" value="P:mitotic nuclear membrane biogenesis"/>
    <property type="evidence" value="ECO:0000315"/>
    <property type="project" value="PomBase"/>
</dbReference>
<dbReference type="GO" id="GO:0006654">
    <property type="term" value="P:phosphatidic acid biosynthetic process"/>
    <property type="evidence" value="ECO:0000315"/>
    <property type="project" value="PomBase"/>
</dbReference>
<dbReference type="GO" id="GO:0016192">
    <property type="term" value="P:vesicle-mediated transport"/>
    <property type="evidence" value="ECO:0007669"/>
    <property type="project" value="UniProtKB-KW"/>
</dbReference>
<dbReference type="InterPro" id="IPR037997">
    <property type="entry name" value="Dgk1-like"/>
</dbReference>
<dbReference type="PANTHER" id="PTHR31303">
    <property type="entry name" value="CTP-DEPENDENT DIACYLGLYCEROL KINASE 1"/>
    <property type="match status" value="1"/>
</dbReference>
<dbReference type="PANTHER" id="PTHR31303:SF1">
    <property type="entry name" value="CTP-DEPENDENT DIACYLGLYCEROL KINASE 1"/>
    <property type="match status" value="1"/>
</dbReference>
<comment type="function">
    <text evidence="1 3">CTP-dependent diacylglycerol kinase that catalyzes the phosphorylation of diacylglycerol (DAG) to phosphatidate (PA). Controls phosphatidate levels at the nuclear envelope. Counteracts the activity of PA phosphatase ned1. May be involved in vesicle trafficking between the endoplasmic reticulum and the Golgi apparatus (By similarity). Involved in pre-tRNA splicing (PubMed:11955632).</text>
</comment>
<comment type="catalytic activity">
    <reaction evidence="1">
        <text>a 1,2-diacyl-sn-glycerol + CTP = a 1,2-diacyl-sn-glycero-3-phosphate + CDP + H(+)</text>
        <dbReference type="Rhea" id="RHEA:25948"/>
        <dbReference type="ChEBI" id="CHEBI:15378"/>
        <dbReference type="ChEBI" id="CHEBI:17815"/>
        <dbReference type="ChEBI" id="CHEBI:37563"/>
        <dbReference type="ChEBI" id="CHEBI:58069"/>
        <dbReference type="ChEBI" id="CHEBI:58608"/>
        <dbReference type="EC" id="2.7.1.174"/>
    </reaction>
</comment>
<comment type="cofactor">
    <cofactor evidence="1">
        <name>Ca(2+)</name>
        <dbReference type="ChEBI" id="CHEBI:29108"/>
    </cofactor>
    <cofactor evidence="1">
        <name>Mg(2+)</name>
        <dbReference type="ChEBI" id="CHEBI:18420"/>
    </cofactor>
</comment>
<comment type="subcellular location">
    <subcellularLocation>
        <location evidence="4 5">Endoplasmic reticulum membrane</location>
        <topology evidence="2">Multi-pass membrane protein</topology>
    </subcellularLocation>
    <subcellularLocation>
        <location evidence="5">Nucleus membrane</location>
        <topology evidence="2">Multi-pass membrane protein</topology>
    </subcellularLocation>
</comment>
<comment type="similarity">
    <text evidence="2">Belongs to the DGK1 family.</text>
</comment>
<reference evidence="6" key="1">
    <citation type="journal article" date="2002" name="Biochim. Biophys. Acta">
        <title>A potential membrane protein involved in pre-tRNA splicing of Schizosaccharomyces pombe.</title>
        <authorList>
            <person name="Kim M."/>
            <person name="Hwang K."/>
            <person name="Lim C.-J."/>
            <person name="Kim D."/>
        </authorList>
    </citation>
    <scope>NUCLEOTIDE SEQUENCE [GENOMIC DNA]</scope>
    <scope>FUNCTION</scope>
    <scope>TRANSMEMBRANE DOMAINS</scope>
</reference>
<reference evidence="7" key="2">
    <citation type="journal article" date="2002" name="Nature">
        <title>The genome sequence of Schizosaccharomyces pombe.</title>
        <authorList>
            <person name="Wood V."/>
            <person name="Gwilliam R."/>
            <person name="Rajandream M.A."/>
            <person name="Lyne M.H."/>
            <person name="Lyne R."/>
            <person name="Stewart A."/>
            <person name="Sgouros J.G."/>
            <person name="Peat N."/>
            <person name="Hayles J."/>
            <person name="Baker S.G."/>
            <person name="Basham D."/>
            <person name="Bowman S."/>
            <person name="Brooks K."/>
            <person name="Brown D."/>
            <person name="Brown S."/>
            <person name="Chillingworth T."/>
            <person name="Churcher C.M."/>
            <person name="Collins M."/>
            <person name="Connor R."/>
            <person name="Cronin A."/>
            <person name="Davis P."/>
            <person name="Feltwell T."/>
            <person name="Fraser A."/>
            <person name="Gentles S."/>
            <person name="Goble A."/>
            <person name="Hamlin N."/>
            <person name="Harris D.E."/>
            <person name="Hidalgo J."/>
            <person name="Hodgson G."/>
            <person name="Holroyd S."/>
            <person name="Hornsby T."/>
            <person name="Howarth S."/>
            <person name="Huckle E.J."/>
            <person name="Hunt S."/>
            <person name="Jagels K."/>
            <person name="James K.D."/>
            <person name="Jones L."/>
            <person name="Jones M."/>
            <person name="Leather S."/>
            <person name="McDonald S."/>
            <person name="McLean J."/>
            <person name="Mooney P."/>
            <person name="Moule S."/>
            <person name="Mungall K.L."/>
            <person name="Murphy L.D."/>
            <person name="Niblett D."/>
            <person name="Odell C."/>
            <person name="Oliver K."/>
            <person name="O'Neil S."/>
            <person name="Pearson D."/>
            <person name="Quail M.A."/>
            <person name="Rabbinowitsch E."/>
            <person name="Rutherford K.M."/>
            <person name="Rutter S."/>
            <person name="Saunders D."/>
            <person name="Seeger K."/>
            <person name="Sharp S."/>
            <person name="Skelton J."/>
            <person name="Simmonds M.N."/>
            <person name="Squares R."/>
            <person name="Squares S."/>
            <person name="Stevens K."/>
            <person name="Taylor K."/>
            <person name="Taylor R.G."/>
            <person name="Tivey A."/>
            <person name="Walsh S.V."/>
            <person name="Warren T."/>
            <person name="Whitehead S."/>
            <person name="Woodward J.R."/>
            <person name="Volckaert G."/>
            <person name="Aert R."/>
            <person name="Robben J."/>
            <person name="Grymonprez B."/>
            <person name="Weltjens I."/>
            <person name="Vanstreels E."/>
            <person name="Rieger M."/>
            <person name="Schaefer M."/>
            <person name="Mueller-Auer S."/>
            <person name="Gabel C."/>
            <person name="Fuchs M."/>
            <person name="Duesterhoeft A."/>
            <person name="Fritzc C."/>
            <person name="Holzer E."/>
            <person name="Moestl D."/>
            <person name="Hilbert H."/>
            <person name="Borzym K."/>
            <person name="Langer I."/>
            <person name="Beck A."/>
            <person name="Lehrach H."/>
            <person name="Reinhardt R."/>
            <person name="Pohl T.M."/>
            <person name="Eger P."/>
            <person name="Zimmermann W."/>
            <person name="Wedler H."/>
            <person name="Wambutt R."/>
            <person name="Purnelle B."/>
            <person name="Goffeau A."/>
            <person name="Cadieu E."/>
            <person name="Dreano S."/>
            <person name="Gloux S."/>
            <person name="Lelaure V."/>
            <person name="Mottier S."/>
            <person name="Galibert F."/>
            <person name="Aves S.J."/>
            <person name="Xiang Z."/>
            <person name="Hunt C."/>
            <person name="Moore K."/>
            <person name="Hurst S.M."/>
            <person name="Lucas M."/>
            <person name="Rochet M."/>
            <person name="Gaillardin C."/>
            <person name="Tallada V.A."/>
            <person name="Garzon A."/>
            <person name="Thode G."/>
            <person name="Daga R.R."/>
            <person name="Cruzado L."/>
            <person name="Jimenez J."/>
            <person name="Sanchez M."/>
            <person name="del Rey F."/>
            <person name="Benito J."/>
            <person name="Dominguez A."/>
            <person name="Revuelta J.L."/>
            <person name="Moreno S."/>
            <person name="Armstrong J."/>
            <person name="Forsburg S.L."/>
            <person name="Cerutti L."/>
            <person name="Lowe T."/>
            <person name="McCombie W.R."/>
            <person name="Paulsen I."/>
            <person name="Potashkin J."/>
            <person name="Shpakovski G.V."/>
            <person name="Ussery D."/>
            <person name="Barrell B.G."/>
            <person name="Nurse P."/>
        </authorList>
    </citation>
    <scope>NUCLEOTIDE SEQUENCE [LARGE SCALE GENOMIC DNA]</scope>
    <source>
        <strain>972 / ATCC 24843</strain>
    </source>
</reference>
<reference evidence="6" key="3">
    <citation type="journal article" date="2006" name="Nat. Biotechnol.">
        <title>ORFeome cloning and global analysis of protein localization in the fission yeast Schizosaccharomyces pombe.</title>
        <authorList>
            <person name="Matsuyama A."/>
            <person name="Arai R."/>
            <person name="Yashiroda Y."/>
            <person name="Shirai A."/>
            <person name="Kamata A."/>
            <person name="Sekido S."/>
            <person name="Kobayashi Y."/>
            <person name="Hashimoto A."/>
            <person name="Hamamoto M."/>
            <person name="Hiraoka Y."/>
            <person name="Horinouchi S."/>
            <person name="Yoshida M."/>
        </authorList>
    </citation>
    <scope>SUBCELLULAR LOCATION [LARGE SCALE ANALYSIS]</scope>
</reference>
<reference key="4">
    <citation type="journal article" date="2016" name="Traffic">
        <title>Lipid droplets form from distinct regions of the cell in the fission yeast Schizosaccharomyces pombe.</title>
        <authorList>
            <person name="Meyers A."/>
            <person name="Del Rio Z.P."/>
            <person name="Beaver R.A."/>
            <person name="Morris R.M."/>
            <person name="Weiskittel T.M."/>
            <person name="Alshibli A.K."/>
            <person name="Mannik J."/>
            <person name="Morrell-Falvey J."/>
            <person name="Dalhaimer P."/>
        </authorList>
    </citation>
    <scope>SUBCELLULAR LOCATION</scope>
</reference>
<organism>
    <name type="scientific">Schizosaccharomyces pombe (strain 972 / ATCC 24843)</name>
    <name type="common">Fission yeast</name>
    <dbReference type="NCBI Taxonomy" id="284812"/>
    <lineage>
        <taxon>Eukaryota</taxon>
        <taxon>Fungi</taxon>
        <taxon>Dikarya</taxon>
        <taxon>Ascomycota</taxon>
        <taxon>Taphrinomycotina</taxon>
        <taxon>Schizosaccharomycetes</taxon>
        <taxon>Schizosaccharomycetales</taxon>
        <taxon>Schizosaccharomycetaceae</taxon>
        <taxon>Schizosaccharomyces</taxon>
    </lineage>
</organism>
<feature type="chain" id="PRO_0000371716" description="CTP-dependent diacylglycerol kinase 1">
    <location>
        <begin position="1"/>
        <end position="218"/>
    </location>
</feature>
<feature type="topological domain" description="Lumenal" evidence="1">
    <location>
        <begin position="1"/>
        <end position="19"/>
    </location>
</feature>
<feature type="transmembrane region" description="Helical" evidence="2">
    <location>
        <begin position="20"/>
        <end position="37"/>
    </location>
</feature>
<feature type="topological domain" description="Cytoplasmic" evidence="1">
    <location>
        <position position="38"/>
    </location>
</feature>
<feature type="transmembrane region" description="Helical" evidence="2">
    <location>
        <begin position="39"/>
        <end position="59"/>
    </location>
</feature>
<feature type="topological domain" description="Lumenal" evidence="1">
    <location>
        <begin position="60"/>
        <end position="88"/>
    </location>
</feature>
<feature type="transmembrane region" description="Helical" evidence="2">
    <location>
        <begin position="89"/>
        <end position="109"/>
    </location>
</feature>
<feature type="topological domain" description="Cytoplasmic" evidence="1">
    <location>
        <begin position="110"/>
        <end position="142"/>
    </location>
</feature>
<feature type="transmembrane region" description="Helical" evidence="2">
    <location>
        <begin position="143"/>
        <end position="163"/>
    </location>
</feature>
<feature type="topological domain" description="Lumenal" evidence="1">
    <location>
        <begin position="164"/>
        <end position="179"/>
    </location>
</feature>
<feature type="transmembrane region" description="Helical" evidence="2">
    <location>
        <begin position="180"/>
        <end position="200"/>
    </location>
</feature>
<feature type="transmembrane region" description="Helical" evidence="2">
    <location>
        <begin position="201"/>
        <end position="217"/>
    </location>
</feature>
<feature type="topological domain" description="Lumenal" evidence="1">
    <location>
        <position position="218"/>
    </location>
</feature>
<protein>
    <recommendedName>
        <fullName>CTP-dependent diacylglycerol kinase 1</fullName>
        <ecNumber evidence="1">2.7.1.174</ecNumber>
    </recommendedName>
    <alternativeName>
        <fullName evidence="1">Diglyceride kinase 1</fullName>
        <shortName evidence="1">DAG kinase 1</shortName>
    </alternativeName>
</protein>
<evidence type="ECO:0000250" key="1">
    <source>
        <dbReference type="UniProtKB" id="Q12382"/>
    </source>
</evidence>
<evidence type="ECO:0000255" key="2"/>
<evidence type="ECO:0000269" key="3">
    <source>
    </source>
</evidence>
<evidence type="ECO:0000269" key="4">
    <source>
    </source>
</evidence>
<evidence type="ECO:0000269" key="5">
    <source>
    </source>
</evidence>
<evidence type="ECO:0000305" key="6"/>
<evidence type="ECO:0000312" key="7">
    <source>
        <dbReference type="EMBL" id="CAB09125.1"/>
    </source>
</evidence>
<keyword id="KW-0106">Calcium</keyword>
<keyword id="KW-0256">Endoplasmic reticulum</keyword>
<keyword id="KW-0931">ER-Golgi transport</keyword>
<keyword id="KW-0418">Kinase</keyword>
<keyword id="KW-0460">Magnesium</keyword>
<keyword id="KW-0472">Membrane</keyword>
<keyword id="KW-0539">Nucleus</keyword>
<keyword id="KW-1185">Reference proteome</keyword>
<keyword id="KW-0808">Transferase</keyword>
<keyword id="KW-0812">Transmembrane</keyword>
<keyword id="KW-1133">Transmembrane helix</keyword>
<keyword id="KW-0813">Transport</keyword>
<name>DGK1_SCHPO</name>
<proteinExistence type="inferred from homology"/>
<accession>P87170</accession>